<reference key="1">
    <citation type="journal article" date="2013" name="Proc. Natl. Acad. Sci. U.S.A.">
        <title>Polynucleobacter necessarius, a model for genome reduction in both free-living and symbiotic bacteria.</title>
        <authorList>
            <person name="Boscaro V."/>
            <person name="Felletti M."/>
            <person name="Vannini C."/>
            <person name="Ackerman M.S."/>
            <person name="Chain P.S."/>
            <person name="Malfatti S."/>
            <person name="Vergez L.M."/>
            <person name="Shin M."/>
            <person name="Doak T.G."/>
            <person name="Lynch M."/>
            <person name="Petroni G."/>
        </authorList>
    </citation>
    <scope>NUCLEOTIDE SEQUENCE [LARGE SCALE GENOMIC DNA]</scope>
    <source>
        <strain>STIR1</strain>
    </source>
</reference>
<accession>B1XW26</accession>
<keyword id="KW-0064">Aspartyl protease</keyword>
<keyword id="KW-0997">Cell inner membrane</keyword>
<keyword id="KW-1003">Cell membrane</keyword>
<keyword id="KW-0378">Hydrolase</keyword>
<keyword id="KW-0472">Membrane</keyword>
<keyword id="KW-0645">Protease</keyword>
<keyword id="KW-0812">Transmembrane</keyword>
<keyword id="KW-1133">Transmembrane helix</keyword>
<dbReference type="EC" id="3.4.23.36" evidence="1"/>
<dbReference type="EMBL" id="CP001010">
    <property type="protein sequence ID" value="ACB44553.1"/>
    <property type="molecule type" value="Genomic_DNA"/>
</dbReference>
<dbReference type="SMR" id="B1XW26"/>
<dbReference type="STRING" id="452638.Pnec_1459"/>
<dbReference type="KEGG" id="pne:Pnec_1459"/>
<dbReference type="eggNOG" id="COG0597">
    <property type="taxonomic scope" value="Bacteria"/>
</dbReference>
<dbReference type="HOGENOM" id="CLU_083252_4_0_4"/>
<dbReference type="OrthoDB" id="9810259at2"/>
<dbReference type="UniPathway" id="UPA00665"/>
<dbReference type="GO" id="GO:0005886">
    <property type="term" value="C:plasma membrane"/>
    <property type="evidence" value="ECO:0007669"/>
    <property type="project" value="UniProtKB-SubCell"/>
</dbReference>
<dbReference type="GO" id="GO:0004190">
    <property type="term" value="F:aspartic-type endopeptidase activity"/>
    <property type="evidence" value="ECO:0007669"/>
    <property type="project" value="UniProtKB-UniRule"/>
</dbReference>
<dbReference type="GO" id="GO:0006508">
    <property type="term" value="P:proteolysis"/>
    <property type="evidence" value="ECO:0007669"/>
    <property type="project" value="UniProtKB-KW"/>
</dbReference>
<dbReference type="HAMAP" id="MF_00161">
    <property type="entry name" value="LspA"/>
    <property type="match status" value="1"/>
</dbReference>
<dbReference type="InterPro" id="IPR001872">
    <property type="entry name" value="Peptidase_A8"/>
</dbReference>
<dbReference type="NCBIfam" id="TIGR00077">
    <property type="entry name" value="lspA"/>
    <property type="match status" value="1"/>
</dbReference>
<dbReference type="PANTHER" id="PTHR33695">
    <property type="entry name" value="LIPOPROTEIN SIGNAL PEPTIDASE"/>
    <property type="match status" value="1"/>
</dbReference>
<dbReference type="PANTHER" id="PTHR33695:SF1">
    <property type="entry name" value="LIPOPROTEIN SIGNAL PEPTIDASE"/>
    <property type="match status" value="1"/>
</dbReference>
<dbReference type="Pfam" id="PF01252">
    <property type="entry name" value="Peptidase_A8"/>
    <property type="match status" value="1"/>
</dbReference>
<dbReference type="PRINTS" id="PR00781">
    <property type="entry name" value="LIPOSIGPTASE"/>
</dbReference>
<dbReference type="PROSITE" id="PS00855">
    <property type="entry name" value="SPASE_II"/>
    <property type="match status" value="1"/>
</dbReference>
<comment type="function">
    <text evidence="1">This protein specifically catalyzes the removal of signal peptides from prolipoproteins.</text>
</comment>
<comment type="catalytic activity">
    <reaction evidence="1">
        <text>Release of signal peptides from bacterial membrane prolipoproteins. Hydrolyzes -Xaa-Yaa-Zaa-|-(S,diacylglyceryl)Cys-, in which Xaa is hydrophobic (preferably Leu), and Yaa (Ala or Ser) and Zaa (Gly or Ala) have small, neutral side chains.</text>
        <dbReference type="EC" id="3.4.23.36"/>
    </reaction>
</comment>
<comment type="pathway">
    <text evidence="1">Protein modification; lipoprotein biosynthesis (signal peptide cleavage).</text>
</comment>
<comment type="subcellular location">
    <subcellularLocation>
        <location evidence="1">Cell inner membrane</location>
        <topology evidence="1">Multi-pass membrane protein</topology>
    </subcellularLocation>
</comment>
<comment type="similarity">
    <text evidence="1">Belongs to the peptidase A8 family.</text>
</comment>
<protein>
    <recommendedName>
        <fullName evidence="1">Lipoprotein signal peptidase</fullName>
        <ecNumber evidence="1">3.4.23.36</ecNumber>
    </recommendedName>
    <alternativeName>
        <fullName evidence="1">Prolipoprotein signal peptidase</fullName>
    </alternativeName>
    <alternativeName>
        <fullName evidence="1">Signal peptidase II</fullName>
        <shortName evidence="1">SPase II</shortName>
    </alternativeName>
</protein>
<proteinExistence type="inferred from homology"/>
<sequence>MKSLSLLRYLAIAIIVLLLDQLSKWSALSNLQMGIPEPVLPFMNWLLLFNPGTAFSFLAQGSGWQRWFFTVLGLAASIYIIWMLYKSQSDKLLCIALSLILGGALGNVLDRVMYGAVVDFIDLHYANWHWPAFNIADSAICVGAALIIWGELRKSFGKSAQSH</sequence>
<evidence type="ECO:0000255" key="1">
    <source>
        <dbReference type="HAMAP-Rule" id="MF_00161"/>
    </source>
</evidence>
<name>LSPA_POLNS</name>
<feature type="chain" id="PRO_1000097270" description="Lipoprotein signal peptidase">
    <location>
        <begin position="1"/>
        <end position="163"/>
    </location>
</feature>
<feature type="transmembrane region" description="Helical" evidence="1">
    <location>
        <begin position="9"/>
        <end position="29"/>
    </location>
</feature>
<feature type="transmembrane region" description="Helical" evidence="1">
    <location>
        <begin position="39"/>
        <end position="59"/>
    </location>
</feature>
<feature type="transmembrane region" description="Helical" evidence="1">
    <location>
        <begin position="67"/>
        <end position="87"/>
    </location>
</feature>
<feature type="transmembrane region" description="Helical" evidence="1">
    <location>
        <begin position="92"/>
        <end position="112"/>
    </location>
</feature>
<feature type="transmembrane region" description="Helical" evidence="1">
    <location>
        <begin position="130"/>
        <end position="150"/>
    </location>
</feature>
<feature type="active site" evidence="1">
    <location>
        <position position="119"/>
    </location>
</feature>
<feature type="active site" evidence="1">
    <location>
        <position position="137"/>
    </location>
</feature>
<organism>
    <name type="scientific">Polynucleobacter necessarius subsp. necessarius (strain STIR1)</name>
    <dbReference type="NCBI Taxonomy" id="452638"/>
    <lineage>
        <taxon>Bacteria</taxon>
        <taxon>Pseudomonadati</taxon>
        <taxon>Pseudomonadota</taxon>
        <taxon>Betaproteobacteria</taxon>
        <taxon>Burkholderiales</taxon>
        <taxon>Burkholderiaceae</taxon>
        <taxon>Polynucleobacter</taxon>
    </lineage>
</organism>
<gene>
    <name evidence="1" type="primary">lspA</name>
    <name type="ordered locus">Pnec_1459</name>
</gene>